<accession>Q0HTW8</accession>
<evidence type="ECO:0000255" key="1">
    <source>
        <dbReference type="HAMAP-Rule" id="MF_00741"/>
    </source>
</evidence>
<proteinExistence type="inferred from homology"/>
<keyword id="KW-0067">ATP-binding</keyword>
<keyword id="KW-0963">Cytoplasm</keyword>
<keyword id="KW-0436">Ligase</keyword>
<keyword id="KW-0547">Nucleotide-binding</keyword>
<keyword id="KW-0658">Purine biosynthesis</keyword>
<gene>
    <name evidence="1" type="primary">purM</name>
    <name type="ordered locus">Shewmr7_2452</name>
</gene>
<name>PUR5_SHESR</name>
<dbReference type="EC" id="6.3.3.1" evidence="1"/>
<dbReference type="EMBL" id="CP000444">
    <property type="protein sequence ID" value="ABI43437.1"/>
    <property type="molecule type" value="Genomic_DNA"/>
</dbReference>
<dbReference type="SMR" id="Q0HTW8"/>
<dbReference type="KEGG" id="shm:Shewmr7_2452"/>
<dbReference type="HOGENOM" id="CLU_047116_0_0_6"/>
<dbReference type="UniPathway" id="UPA00074">
    <property type="reaction ID" value="UER00129"/>
</dbReference>
<dbReference type="GO" id="GO:0005829">
    <property type="term" value="C:cytosol"/>
    <property type="evidence" value="ECO:0007669"/>
    <property type="project" value="TreeGrafter"/>
</dbReference>
<dbReference type="GO" id="GO:0005524">
    <property type="term" value="F:ATP binding"/>
    <property type="evidence" value="ECO:0007669"/>
    <property type="project" value="UniProtKB-KW"/>
</dbReference>
<dbReference type="GO" id="GO:0004637">
    <property type="term" value="F:phosphoribosylamine-glycine ligase activity"/>
    <property type="evidence" value="ECO:0007669"/>
    <property type="project" value="TreeGrafter"/>
</dbReference>
<dbReference type="GO" id="GO:0004641">
    <property type="term" value="F:phosphoribosylformylglycinamidine cyclo-ligase activity"/>
    <property type="evidence" value="ECO:0007669"/>
    <property type="project" value="UniProtKB-UniRule"/>
</dbReference>
<dbReference type="GO" id="GO:0006189">
    <property type="term" value="P:'de novo' IMP biosynthetic process"/>
    <property type="evidence" value="ECO:0007669"/>
    <property type="project" value="UniProtKB-UniRule"/>
</dbReference>
<dbReference type="GO" id="GO:0046084">
    <property type="term" value="P:adenine biosynthetic process"/>
    <property type="evidence" value="ECO:0007669"/>
    <property type="project" value="TreeGrafter"/>
</dbReference>
<dbReference type="CDD" id="cd02196">
    <property type="entry name" value="PurM"/>
    <property type="match status" value="1"/>
</dbReference>
<dbReference type="FunFam" id="3.30.1330.10:FF:000001">
    <property type="entry name" value="Phosphoribosylformylglycinamidine cyclo-ligase"/>
    <property type="match status" value="1"/>
</dbReference>
<dbReference type="FunFam" id="3.90.650.10:FF:000001">
    <property type="entry name" value="Phosphoribosylformylglycinamidine cyclo-ligase"/>
    <property type="match status" value="1"/>
</dbReference>
<dbReference type="Gene3D" id="3.90.650.10">
    <property type="entry name" value="PurM-like C-terminal domain"/>
    <property type="match status" value="1"/>
</dbReference>
<dbReference type="Gene3D" id="3.30.1330.10">
    <property type="entry name" value="PurM-like, N-terminal domain"/>
    <property type="match status" value="1"/>
</dbReference>
<dbReference type="HAMAP" id="MF_00741">
    <property type="entry name" value="AIRS"/>
    <property type="match status" value="1"/>
</dbReference>
<dbReference type="InterPro" id="IPR010918">
    <property type="entry name" value="PurM-like_C_dom"/>
</dbReference>
<dbReference type="InterPro" id="IPR036676">
    <property type="entry name" value="PurM-like_C_sf"/>
</dbReference>
<dbReference type="InterPro" id="IPR016188">
    <property type="entry name" value="PurM-like_N"/>
</dbReference>
<dbReference type="InterPro" id="IPR036921">
    <property type="entry name" value="PurM-like_N_sf"/>
</dbReference>
<dbReference type="InterPro" id="IPR004733">
    <property type="entry name" value="PurM_cligase"/>
</dbReference>
<dbReference type="NCBIfam" id="TIGR00878">
    <property type="entry name" value="purM"/>
    <property type="match status" value="1"/>
</dbReference>
<dbReference type="PANTHER" id="PTHR10520:SF12">
    <property type="entry name" value="TRIFUNCTIONAL PURINE BIOSYNTHETIC PROTEIN ADENOSINE-3"/>
    <property type="match status" value="1"/>
</dbReference>
<dbReference type="PANTHER" id="PTHR10520">
    <property type="entry name" value="TRIFUNCTIONAL PURINE BIOSYNTHETIC PROTEIN ADENOSINE-3-RELATED"/>
    <property type="match status" value="1"/>
</dbReference>
<dbReference type="Pfam" id="PF00586">
    <property type="entry name" value="AIRS"/>
    <property type="match status" value="1"/>
</dbReference>
<dbReference type="Pfam" id="PF02769">
    <property type="entry name" value="AIRS_C"/>
    <property type="match status" value="1"/>
</dbReference>
<dbReference type="SUPFAM" id="SSF56042">
    <property type="entry name" value="PurM C-terminal domain-like"/>
    <property type="match status" value="1"/>
</dbReference>
<dbReference type="SUPFAM" id="SSF55326">
    <property type="entry name" value="PurM N-terminal domain-like"/>
    <property type="match status" value="1"/>
</dbReference>
<comment type="catalytic activity">
    <reaction evidence="1">
        <text>2-formamido-N(1)-(5-O-phospho-beta-D-ribosyl)acetamidine + ATP = 5-amino-1-(5-phospho-beta-D-ribosyl)imidazole + ADP + phosphate + H(+)</text>
        <dbReference type="Rhea" id="RHEA:23032"/>
        <dbReference type="ChEBI" id="CHEBI:15378"/>
        <dbReference type="ChEBI" id="CHEBI:30616"/>
        <dbReference type="ChEBI" id="CHEBI:43474"/>
        <dbReference type="ChEBI" id="CHEBI:137981"/>
        <dbReference type="ChEBI" id="CHEBI:147287"/>
        <dbReference type="ChEBI" id="CHEBI:456216"/>
        <dbReference type="EC" id="6.3.3.1"/>
    </reaction>
</comment>
<comment type="pathway">
    <text evidence="1">Purine metabolism; IMP biosynthesis via de novo pathway; 5-amino-1-(5-phospho-D-ribosyl)imidazole from N(2)-formyl-N(1)-(5-phospho-D-ribosyl)glycinamide: step 2/2.</text>
</comment>
<comment type="subcellular location">
    <subcellularLocation>
        <location evidence="1">Cytoplasm</location>
    </subcellularLocation>
</comment>
<comment type="similarity">
    <text evidence="1">Belongs to the AIR synthase family.</text>
</comment>
<sequence length="345" mass="36803">MSTPTPLSYKDAGVDIDAGNALVSNIKAAVKRTRRPEVMGNLGGFGALCELPTKYKQPVLVSGTDGVGTKLRLAIDYKKHDTVGIDLVAMCVNDLIVQGAEPLFFLDYYATGKLDVETATSVVNGIGEGCFQSGCALIGGETAEMPGMYEGEDYDLAGFCVGVVEKADIIDGSKVAAGDALIALASSGPHSNGYSLVRKVLEVSQADPQQDLNGKPLIQHLLEPTKIYVKSLLKLIEASDVHAMAHITGGGFWENIPRVLPENCKAVIQGDSWQWPAVFNWLMENGNIAEYEMYRTFNCGVGMIVALPADKVDAALALLAAEGEQAWLIGAIAPREGNEEQVEIL</sequence>
<organism>
    <name type="scientific">Shewanella sp. (strain MR-7)</name>
    <dbReference type="NCBI Taxonomy" id="60481"/>
    <lineage>
        <taxon>Bacteria</taxon>
        <taxon>Pseudomonadati</taxon>
        <taxon>Pseudomonadota</taxon>
        <taxon>Gammaproteobacteria</taxon>
        <taxon>Alteromonadales</taxon>
        <taxon>Shewanellaceae</taxon>
        <taxon>Shewanella</taxon>
    </lineage>
</organism>
<reference key="1">
    <citation type="submission" date="2006-08" db="EMBL/GenBank/DDBJ databases">
        <title>Complete sequence of chromosome 1 of Shewanella sp. MR-7.</title>
        <authorList>
            <person name="Copeland A."/>
            <person name="Lucas S."/>
            <person name="Lapidus A."/>
            <person name="Barry K."/>
            <person name="Detter J.C."/>
            <person name="Glavina del Rio T."/>
            <person name="Hammon N."/>
            <person name="Israni S."/>
            <person name="Dalin E."/>
            <person name="Tice H."/>
            <person name="Pitluck S."/>
            <person name="Kiss H."/>
            <person name="Brettin T."/>
            <person name="Bruce D."/>
            <person name="Han C."/>
            <person name="Tapia R."/>
            <person name="Gilna P."/>
            <person name="Schmutz J."/>
            <person name="Larimer F."/>
            <person name="Land M."/>
            <person name="Hauser L."/>
            <person name="Kyrpides N."/>
            <person name="Mikhailova N."/>
            <person name="Nealson K."/>
            <person name="Konstantinidis K."/>
            <person name="Klappenbach J."/>
            <person name="Tiedje J."/>
            <person name="Richardson P."/>
        </authorList>
    </citation>
    <scope>NUCLEOTIDE SEQUENCE [LARGE SCALE GENOMIC DNA]</scope>
    <source>
        <strain>MR-7</strain>
    </source>
</reference>
<protein>
    <recommendedName>
        <fullName evidence="1">Phosphoribosylformylglycinamidine cyclo-ligase</fullName>
        <ecNumber evidence="1">6.3.3.1</ecNumber>
    </recommendedName>
    <alternativeName>
        <fullName evidence="1">AIR synthase</fullName>
    </alternativeName>
    <alternativeName>
        <fullName evidence="1">AIRS</fullName>
    </alternativeName>
    <alternativeName>
        <fullName evidence="1">Phosphoribosyl-aminoimidazole synthetase</fullName>
    </alternativeName>
</protein>
<feature type="chain" id="PRO_1000046470" description="Phosphoribosylformylglycinamidine cyclo-ligase">
    <location>
        <begin position="1"/>
        <end position="345"/>
    </location>
</feature>